<feature type="initiator methionine" description="Removed" evidence="1">
    <location>
        <position position="1"/>
    </location>
</feature>
<feature type="chain" id="PRO_0000192988" description="Leghemoglobin">
    <location>
        <begin position="2"/>
        <end position="147"/>
    </location>
</feature>
<feature type="domain" description="Globin" evidence="7">
    <location>
        <begin position="2"/>
        <end position="147"/>
    </location>
</feature>
<feature type="binding site" evidence="4">
    <location>
        <position position="45"/>
    </location>
    <ligand>
        <name>heme b</name>
        <dbReference type="ChEBI" id="CHEBI:60344"/>
    </ligand>
</feature>
<feature type="binding site" evidence="4">
    <location>
        <position position="62"/>
    </location>
    <ligand>
        <name>O2</name>
        <dbReference type="ChEBI" id="CHEBI:15379"/>
    </ligand>
</feature>
<feature type="binding site" evidence="4">
    <location>
        <position position="65"/>
    </location>
    <ligand>
        <name>heme b</name>
        <dbReference type="ChEBI" id="CHEBI:60344"/>
    </ligand>
</feature>
<feature type="binding site" description="proximal binding residue" evidence="7">
    <location>
        <position position="94"/>
    </location>
    <ligand>
        <name>heme b</name>
        <dbReference type="ChEBI" id="CHEBI:60344"/>
    </ligand>
    <ligandPart>
        <name>Fe</name>
        <dbReference type="ChEBI" id="CHEBI:18248"/>
    </ligandPart>
</feature>
<feature type="binding site" evidence="4">
    <location>
        <position position="97"/>
    </location>
    <ligand>
        <name>heme b</name>
        <dbReference type="ChEBI" id="CHEBI:60344"/>
    </ligand>
</feature>
<feature type="modified residue" description="Nitrated tyrosine" evidence="2">
    <location>
        <position position="25"/>
    </location>
</feature>
<feature type="modified residue" description="Nitrated tyrosine" evidence="2">
    <location>
        <position position="30"/>
    </location>
</feature>
<feature type="modified residue" description="Phosphoserine" evidence="5">
    <location>
        <position position="45"/>
    </location>
</feature>
<feature type="modified residue" description="Nitrated tyrosine" evidence="2">
    <location>
        <position position="135"/>
    </location>
</feature>
<gene>
    <name type="primary">LB3</name>
</gene>
<accession>P28010</accession>
<proteinExistence type="evidence at transcript level"/>
<comment type="function">
    <text evidence="3 6">Leghemoglobin that reversibly binds oxygen O(2) through a pentacoordinated heme iron (By similarity). In root nodules, facilitates the diffusion of oxygen to the bacteroids while preventing the bacterial nitrogenase from being inactivated by buffering dioxygen, nitric oxide and carbon monoxide, and promoting the formation of reactive oxygen species (ROS, e.g. H(2)O(2)) (By similarity). This role is essential for symbiotic nitrogen fixation (SNF) (By similarity).</text>
</comment>
<comment type="subunit">
    <text evidence="4">Monomer.</text>
</comment>
<comment type="subcellular location">
    <subcellularLocation>
        <location evidence="4">Cytoplasm</location>
        <location evidence="4">Cytosol</location>
    </subcellularLocation>
    <subcellularLocation>
        <location evidence="4">Nucleus</location>
    </subcellularLocation>
</comment>
<comment type="tissue specificity">
    <text evidence="8">Root nodules.</text>
</comment>
<comment type="PTM">
    <text evidence="2">Nitrated in effective nodules and particularly in hypoxic conditions; this mechanism may play a protective role in the symbiosis by buffering toxic peroxynitrite NO(2)(-). Nitration level decrease during nodule senescence.</text>
</comment>
<comment type="PTM">
    <text evidence="5">Phosphorylation at Ser-45 disrupts the molecular environment of its porphyrin ring oxygen binding pocket, thus leading to a reduced oxygen consumption and to the delivery of oxygen O(2) to symbiosomes.</text>
</comment>
<comment type="similarity">
    <text evidence="9">Belongs to the plant globin family.</text>
</comment>
<name>LGB4_MEDSA</name>
<evidence type="ECO:0000250" key="1">
    <source>
        <dbReference type="UniProtKB" id="P02233"/>
    </source>
</evidence>
<evidence type="ECO:0000250" key="2">
    <source>
        <dbReference type="UniProtKB" id="P02234"/>
    </source>
</evidence>
<evidence type="ECO:0000250" key="3">
    <source>
        <dbReference type="UniProtKB" id="P02237"/>
    </source>
</evidence>
<evidence type="ECO:0000250" key="4">
    <source>
        <dbReference type="UniProtKB" id="P02240"/>
    </source>
</evidence>
<evidence type="ECO:0000250" key="5">
    <source>
        <dbReference type="UniProtKB" id="Q3C1F7"/>
    </source>
</evidence>
<evidence type="ECO:0000250" key="6">
    <source>
        <dbReference type="UniProtKB" id="Q43296"/>
    </source>
</evidence>
<evidence type="ECO:0000255" key="7">
    <source>
        <dbReference type="PROSITE-ProRule" id="PRU00238"/>
    </source>
</evidence>
<evidence type="ECO:0000269" key="8">
    <source>
    </source>
</evidence>
<evidence type="ECO:0000305" key="9"/>
<reference key="1">
    <citation type="journal article" date="1992" name="Plant Mol. Biol.">
        <title>An alfalfa (Medicago sativa L.) cDNA encoding an acidic leghemoglobin (MsLb3).</title>
        <authorList>
            <person name="Loebler M."/>
            <person name="Hirsch A.M."/>
        </authorList>
    </citation>
    <scope>NUCLEOTIDE SEQUENCE [MRNA]</scope>
    <scope>TISSUE SPECIFICITY</scope>
    <source>
        <strain>cv. Iroquois</strain>
        <tissue>Root nodule</tissue>
    </source>
</reference>
<keyword id="KW-0963">Cytoplasm</keyword>
<keyword id="KW-0349">Heme</keyword>
<keyword id="KW-0408">Iron</keyword>
<keyword id="KW-0479">Metal-binding</keyword>
<keyword id="KW-0944">Nitration</keyword>
<keyword id="KW-0535">Nitrogen fixation</keyword>
<keyword id="KW-0536">Nodulation</keyword>
<keyword id="KW-0539">Nucleus</keyword>
<keyword id="KW-0561">Oxygen transport</keyword>
<keyword id="KW-0597">Phosphoprotein</keyword>
<keyword id="KW-0813">Transport</keyword>
<protein>
    <recommendedName>
        <fullName>Leghemoglobin</fullName>
    </recommendedName>
</protein>
<dbReference type="EMBL" id="M91077">
    <property type="protein sequence ID" value="AAB48005.1"/>
    <property type="molecule type" value="mRNA"/>
</dbReference>
<dbReference type="PIR" id="S28613">
    <property type="entry name" value="S28613"/>
</dbReference>
<dbReference type="SMR" id="P28010"/>
<dbReference type="GO" id="GO:0005829">
    <property type="term" value="C:cytosol"/>
    <property type="evidence" value="ECO:0007669"/>
    <property type="project" value="UniProtKB-SubCell"/>
</dbReference>
<dbReference type="GO" id="GO:0005634">
    <property type="term" value="C:nucleus"/>
    <property type="evidence" value="ECO:0007669"/>
    <property type="project" value="UniProtKB-SubCell"/>
</dbReference>
<dbReference type="GO" id="GO:0020037">
    <property type="term" value="F:heme binding"/>
    <property type="evidence" value="ECO:0007669"/>
    <property type="project" value="InterPro"/>
</dbReference>
<dbReference type="GO" id="GO:0046872">
    <property type="term" value="F:metal ion binding"/>
    <property type="evidence" value="ECO:0007669"/>
    <property type="project" value="UniProtKB-KW"/>
</dbReference>
<dbReference type="GO" id="GO:0019825">
    <property type="term" value="F:oxygen binding"/>
    <property type="evidence" value="ECO:0007669"/>
    <property type="project" value="InterPro"/>
</dbReference>
<dbReference type="GO" id="GO:0005344">
    <property type="term" value="F:oxygen carrier activity"/>
    <property type="evidence" value="ECO:0007669"/>
    <property type="project" value="UniProtKB-KW"/>
</dbReference>
<dbReference type="GO" id="GO:0009877">
    <property type="term" value="P:nodulation"/>
    <property type="evidence" value="ECO:0007669"/>
    <property type="project" value="UniProtKB-KW"/>
</dbReference>
<dbReference type="CDD" id="cd08923">
    <property type="entry name" value="class1-2_nsHbs_Lbs"/>
    <property type="match status" value="1"/>
</dbReference>
<dbReference type="Gene3D" id="1.10.490.10">
    <property type="entry name" value="Globins"/>
    <property type="match status" value="1"/>
</dbReference>
<dbReference type="InterPro" id="IPR000971">
    <property type="entry name" value="Globin"/>
</dbReference>
<dbReference type="InterPro" id="IPR009050">
    <property type="entry name" value="Globin-like_sf"/>
</dbReference>
<dbReference type="InterPro" id="IPR012292">
    <property type="entry name" value="Globin/Proto"/>
</dbReference>
<dbReference type="InterPro" id="IPR001032">
    <property type="entry name" value="Leghaemoglobin-like"/>
</dbReference>
<dbReference type="InterPro" id="IPR019824">
    <property type="entry name" value="Leghaemoglobin_Fe_BS"/>
</dbReference>
<dbReference type="PANTHER" id="PTHR22924">
    <property type="entry name" value="LEGHEMOGLOBIN-RELATED"/>
    <property type="match status" value="1"/>
</dbReference>
<dbReference type="PANTHER" id="PTHR22924:SF92">
    <property type="entry name" value="NON-SYMBIOTIC HEMOGLOBIN 2"/>
    <property type="match status" value="1"/>
</dbReference>
<dbReference type="Pfam" id="PF00042">
    <property type="entry name" value="Globin"/>
    <property type="match status" value="1"/>
</dbReference>
<dbReference type="PRINTS" id="PR00188">
    <property type="entry name" value="PLANTGLOBIN"/>
</dbReference>
<dbReference type="SUPFAM" id="SSF46458">
    <property type="entry name" value="Globin-like"/>
    <property type="match status" value="1"/>
</dbReference>
<dbReference type="PROSITE" id="PS01033">
    <property type="entry name" value="GLOBIN"/>
    <property type="match status" value="1"/>
</dbReference>
<dbReference type="PROSITE" id="PS00208">
    <property type="entry name" value="PLANT_GLOBIN"/>
    <property type="match status" value="1"/>
</dbReference>
<organism>
    <name type="scientific">Medicago sativa</name>
    <name type="common">Alfalfa</name>
    <dbReference type="NCBI Taxonomy" id="3879"/>
    <lineage>
        <taxon>Eukaryota</taxon>
        <taxon>Viridiplantae</taxon>
        <taxon>Streptophyta</taxon>
        <taxon>Embryophyta</taxon>
        <taxon>Tracheophyta</taxon>
        <taxon>Spermatophyta</taxon>
        <taxon>Magnoliopsida</taxon>
        <taxon>eudicotyledons</taxon>
        <taxon>Gunneridae</taxon>
        <taxon>Pentapetalae</taxon>
        <taxon>rosids</taxon>
        <taxon>fabids</taxon>
        <taxon>Fabales</taxon>
        <taxon>Fabaceae</taxon>
        <taxon>Papilionoideae</taxon>
        <taxon>50 kb inversion clade</taxon>
        <taxon>NPAAA clade</taxon>
        <taxon>Hologalegina</taxon>
        <taxon>IRL clade</taxon>
        <taxon>Trifolieae</taxon>
        <taxon>Medicago</taxon>
    </lineage>
</organism>
<sequence>MGFTADQEALVNSSWESFKQNLPGYSVFFYTTILEKAPAAKGMFSFLKDSAGVQDSPQLQAHAEKVFGMVRDSAVQLRATGEVVLGDATLGSIHIQKGVVDPHFVVVKEALLKTIKEAVGDKWSEELSTSWEVAYDGLASAIKKAMS</sequence>